<comment type="catalytic activity">
    <reaction evidence="1">
        <text>D-arabinose 5-phosphate + phosphoenolpyruvate + H2O = 3-deoxy-alpha-D-manno-2-octulosonate-8-phosphate + phosphate</text>
        <dbReference type="Rhea" id="RHEA:14053"/>
        <dbReference type="ChEBI" id="CHEBI:15377"/>
        <dbReference type="ChEBI" id="CHEBI:43474"/>
        <dbReference type="ChEBI" id="CHEBI:57693"/>
        <dbReference type="ChEBI" id="CHEBI:58702"/>
        <dbReference type="ChEBI" id="CHEBI:85985"/>
        <dbReference type="EC" id="2.5.1.55"/>
    </reaction>
</comment>
<comment type="pathway">
    <text evidence="1">Carbohydrate biosynthesis; 3-deoxy-D-manno-octulosonate biosynthesis; 3-deoxy-D-manno-octulosonate from D-ribulose 5-phosphate: step 2/3.</text>
</comment>
<comment type="pathway">
    <text evidence="1">Bacterial outer membrane biogenesis; lipopolysaccharide biosynthesis.</text>
</comment>
<comment type="subcellular location">
    <subcellularLocation>
        <location evidence="1">Cytoplasm</location>
    </subcellularLocation>
</comment>
<comment type="similarity">
    <text evidence="1">Belongs to the KdsA family.</text>
</comment>
<protein>
    <recommendedName>
        <fullName evidence="1">2-dehydro-3-deoxyphosphooctonate aldolase</fullName>
        <ecNumber evidence="1">2.5.1.55</ecNumber>
    </recommendedName>
    <alternativeName>
        <fullName evidence="1">3-deoxy-D-manno-octulosonic acid 8-phosphate synthase</fullName>
    </alternativeName>
    <alternativeName>
        <fullName evidence="1">KDO-8-phosphate synthase</fullName>
        <shortName evidence="1">KDO 8-P synthase</shortName>
        <shortName evidence="1">KDOPS</shortName>
    </alternativeName>
    <alternativeName>
        <fullName evidence="1">Phospho-2-dehydro-3-deoxyoctonate aldolase</fullName>
    </alternativeName>
</protein>
<gene>
    <name evidence="1" type="primary">kdsA</name>
    <name type="ordered locus">SDY_1264</name>
</gene>
<organism>
    <name type="scientific">Shigella dysenteriae serotype 1 (strain Sd197)</name>
    <dbReference type="NCBI Taxonomy" id="300267"/>
    <lineage>
        <taxon>Bacteria</taxon>
        <taxon>Pseudomonadati</taxon>
        <taxon>Pseudomonadota</taxon>
        <taxon>Gammaproteobacteria</taxon>
        <taxon>Enterobacterales</taxon>
        <taxon>Enterobacteriaceae</taxon>
        <taxon>Shigella</taxon>
    </lineage>
</organism>
<dbReference type="EC" id="2.5.1.55" evidence="1"/>
<dbReference type="EMBL" id="CP000034">
    <property type="protein sequence ID" value="ABB61413.1"/>
    <property type="molecule type" value="Genomic_DNA"/>
</dbReference>
<dbReference type="RefSeq" id="WP_000811065.1">
    <property type="nucleotide sequence ID" value="NC_007606.1"/>
</dbReference>
<dbReference type="RefSeq" id="YP_402904.1">
    <property type="nucleotide sequence ID" value="NC_007606.1"/>
</dbReference>
<dbReference type="SMR" id="Q32GZ2"/>
<dbReference type="STRING" id="300267.SDY_1264"/>
<dbReference type="EnsemblBacteria" id="ABB61413">
    <property type="protein sequence ID" value="ABB61413"/>
    <property type="gene ID" value="SDY_1264"/>
</dbReference>
<dbReference type="GeneID" id="75203328"/>
<dbReference type="KEGG" id="sdy:SDY_1264"/>
<dbReference type="PATRIC" id="fig|300267.13.peg.1501"/>
<dbReference type="HOGENOM" id="CLU_036666_0_0_6"/>
<dbReference type="UniPathway" id="UPA00030"/>
<dbReference type="UniPathway" id="UPA00357">
    <property type="reaction ID" value="UER00474"/>
</dbReference>
<dbReference type="Proteomes" id="UP000002716">
    <property type="component" value="Chromosome"/>
</dbReference>
<dbReference type="GO" id="GO:0005737">
    <property type="term" value="C:cytoplasm"/>
    <property type="evidence" value="ECO:0007669"/>
    <property type="project" value="UniProtKB-SubCell"/>
</dbReference>
<dbReference type="GO" id="GO:0008676">
    <property type="term" value="F:3-deoxy-8-phosphooctulonate synthase activity"/>
    <property type="evidence" value="ECO:0007669"/>
    <property type="project" value="UniProtKB-UniRule"/>
</dbReference>
<dbReference type="GO" id="GO:0019294">
    <property type="term" value="P:keto-3-deoxy-D-manno-octulosonic acid biosynthetic process"/>
    <property type="evidence" value="ECO:0007669"/>
    <property type="project" value="UniProtKB-UniRule"/>
</dbReference>
<dbReference type="FunFam" id="3.20.20.70:FF:000058">
    <property type="entry name" value="2-dehydro-3-deoxyphosphooctonate aldolase"/>
    <property type="match status" value="1"/>
</dbReference>
<dbReference type="Gene3D" id="3.20.20.70">
    <property type="entry name" value="Aldolase class I"/>
    <property type="match status" value="1"/>
</dbReference>
<dbReference type="HAMAP" id="MF_00056">
    <property type="entry name" value="KDO8P_synth"/>
    <property type="match status" value="1"/>
</dbReference>
<dbReference type="InterPro" id="IPR013785">
    <property type="entry name" value="Aldolase_TIM"/>
</dbReference>
<dbReference type="InterPro" id="IPR006218">
    <property type="entry name" value="DAHP1/KDSA"/>
</dbReference>
<dbReference type="InterPro" id="IPR006269">
    <property type="entry name" value="KDO8P_synthase"/>
</dbReference>
<dbReference type="NCBIfam" id="TIGR01362">
    <property type="entry name" value="KDO8P_synth"/>
    <property type="match status" value="1"/>
</dbReference>
<dbReference type="NCBIfam" id="NF003543">
    <property type="entry name" value="PRK05198.1"/>
    <property type="match status" value="1"/>
</dbReference>
<dbReference type="NCBIfam" id="NF009109">
    <property type="entry name" value="PRK12457.1"/>
    <property type="match status" value="1"/>
</dbReference>
<dbReference type="PANTHER" id="PTHR21057">
    <property type="entry name" value="PHOSPHO-2-DEHYDRO-3-DEOXYHEPTONATE ALDOLASE"/>
    <property type="match status" value="1"/>
</dbReference>
<dbReference type="Pfam" id="PF00793">
    <property type="entry name" value="DAHP_synth_1"/>
    <property type="match status" value="1"/>
</dbReference>
<dbReference type="SUPFAM" id="SSF51569">
    <property type="entry name" value="Aldolase"/>
    <property type="match status" value="1"/>
</dbReference>
<feature type="chain" id="PRO_0000304492" description="2-dehydro-3-deoxyphosphooctonate aldolase">
    <location>
        <begin position="1"/>
        <end position="284"/>
    </location>
</feature>
<sequence length="284" mass="30833">MKQKVVSIGDINVANDLPFVLFGGMNVLESRDLAMRICEHYVTVTQKLGIPYVFKASFDKANRSSIHSYRGPGLEEGMKIFQELKQTFGVKIITDVHEPSQAQPVADVVDVIQLPAFLARQTDLVEAMAKTGAVINVKKPQFVSPGQMGNIVDKFKEGGNEKVILCDRGANFGYDNLVVDMLGFSIMKKVSGNSPVIFDVTHALQCRDPFGAASGGRRAQVAELARAGMAVGLAGLFIEAHPDPEHAKCDGPSALPLAKLEPFLKQMKAIDDLVKGFEELDTSK</sequence>
<accession>Q32GZ2</accession>
<proteinExistence type="inferred from homology"/>
<evidence type="ECO:0000255" key="1">
    <source>
        <dbReference type="HAMAP-Rule" id="MF_00056"/>
    </source>
</evidence>
<name>KDSA_SHIDS</name>
<reference key="1">
    <citation type="journal article" date="2005" name="Nucleic Acids Res.">
        <title>Genome dynamics and diversity of Shigella species, the etiologic agents of bacillary dysentery.</title>
        <authorList>
            <person name="Yang F."/>
            <person name="Yang J."/>
            <person name="Zhang X."/>
            <person name="Chen L."/>
            <person name="Jiang Y."/>
            <person name="Yan Y."/>
            <person name="Tang X."/>
            <person name="Wang J."/>
            <person name="Xiong Z."/>
            <person name="Dong J."/>
            <person name="Xue Y."/>
            <person name="Zhu Y."/>
            <person name="Xu X."/>
            <person name="Sun L."/>
            <person name="Chen S."/>
            <person name="Nie H."/>
            <person name="Peng J."/>
            <person name="Xu J."/>
            <person name="Wang Y."/>
            <person name="Yuan Z."/>
            <person name="Wen Y."/>
            <person name="Yao Z."/>
            <person name="Shen Y."/>
            <person name="Qiang B."/>
            <person name="Hou Y."/>
            <person name="Yu J."/>
            <person name="Jin Q."/>
        </authorList>
    </citation>
    <scope>NUCLEOTIDE SEQUENCE [LARGE SCALE GENOMIC DNA]</scope>
    <source>
        <strain>Sd197</strain>
    </source>
</reference>
<keyword id="KW-0963">Cytoplasm</keyword>
<keyword id="KW-0448">Lipopolysaccharide biosynthesis</keyword>
<keyword id="KW-1185">Reference proteome</keyword>
<keyword id="KW-0808">Transferase</keyword>